<organism>
    <name type="scientific">Vibrio cholerae serotype O1 (strain ATCC 39541 / Classical Ogawa 395 / O395)</name>
    <dbReference type="NCBI Taxonomy" id="345073"/>
    <lineage>
        <taxon>Bacteria</taxon>
        <taxon>Pseudomonadati</taxon>
        <taxon>Pseudomonadota</taxon>
        <taxon>Gammaproteobacteria</taxon>
        <taxon>Vibrionales</taxon>
        <taxon>Vibrionaceae</taxon>
        <taxon>Vibrio</taxon>
    </lineage>
</organism>
<dbReference type="EMBL" id="M85154">
    <property type="protein sequence ID" value="AAA27519.1"/>
    <property type="molecule type" value="Genomic_DNA"/>
</dbReference>
<dbReference type="EMBL" id="CP000627">
    <property type="protein sequence ID" value="ABQ21165.1"/>
    <property type="molecule type" value="Genomic_DNA"/>
</dbReference>
<dbReference type="EMBL" id="CP001235">
    <property type="protein sequence ID" value="ACP10212.1"/>
    <property type="molecule type" value="Genomic_DNA"/>
</dbReference>
<dbReference type="PIR" id="A42282">
    <property type="entry name" value="A42282"/>
</dbReference>
<dbReference type="SMR" id="A5F6G4"/>
<dbReference type="KEGG" id="vco:VC0395_A1690"/>
<dbReference type="KEGG" id="vcr:VC395_2220"/>
<dbReference type="PATRIC" id="fig|345073.21.peg.2145"/>
<dbReference type="eggNOG" id="COG0735">
    <property type="taxonomic scope" value="Bacteria"/>
</dbReference>
<dbReference type="HOGENOM" id="CLU_096072_3_3_6"/>
<dbReference type="OrthoDB" id="8659436at2"/>
<dbReference type="Proteomes" id="UP000000249">
    <property type="component" value="Chromosome 2"/>
</dbReference>
<dbReference type="CollecTF" id="EXPREG_00000250"/>
<dbReference type="GO" id="GO:0005829">
    <property type="term" value="C:cytosol"/>
    <property type="evidence" value="ECO:0007669"/>
    <property type="project" value="TreeGrafter"/>
</dbReference>
<dbReference type="GO" id="GO:0032993">
    <property type="term" value="C:protein-DNA complex"/>
    <property type="evidence" value="ECO:0000315"/>
    <property type="project" value="CollecTF"/>
</dbReference>
<dbReference type="GO" id="GO:0001216">
    <property type="term" value="F:DNA-binding transcription activator activity"/>
    <property type="evidence" value="ECO:0000315"/>
    <property type="project" value="CollecTF"/>
</dbReference>
<dbReference type="GO" id="GO:0001217">
    <property type="term" value="F:DNA-binding transcription repressor activity"/>
    <property type="evidence" value="ECO:0000353"/>
    <property type="project" value="CollecTF"/>
</dbReference>
<dbReference type="GO" id="GO:0000976">
    <property type="term" value="F:transcription cis-regulatory region binding"/>
    <property type="evidence" value="ECO:0000315"/>
    <property type="project" value="CollecTF"/>
</dbReference>
<dbReference type="GO" id="GO:0008270">
    <property type="term" value="F:zinc ion binding"/>
    <property type="evidence" value="ECO:0007669"/>
    <property type="project" value="TreeGrafter"/>
</dbReference>
<dbReference type="GO" id="GO:0045892">
    <property type="term" value="P:negative regulation of DNA-templated transcription"/>
    <property type="evidence" value="ECO:0000270"/>
    <property type="project" value="CollecTF"/>
</dbReference>
<dbReference type="GO" id="GO:1900705">
    <property type="term" value="P:negative regulation of siderophore biosynthetic process"/>
    <property type="evidence" value="ECO:0007669"/>
    <property type="project" value="TreeGrafter"/>
</dbReference>
<dbReference type="GO" id="GO:0045893">
    <property type="term" value="P:positive regulation of DNA-templated transcription"/>
    <property type="evidence" value="ECO:0000269"/>
    <property type="project" value="CollecTF"/>
</dbReference>
<dbReference type="CDD" id="cd07153">
    <property type="entry name" value="Fur_like"/>
    <property type="match status" value="1"/>
</dbReference>
<dbReference type="FunFam" id="1.10.10.10:FF:000007">
    <property type="entry name" value="Ferric uptake regulation protein"/>
    <property type="match status" value="1"/>
</dbReference>
<dbReference type="FunFam" id="3.30.1490.190:FF:000001">
    <property type="entry name" value="Ferric uptake regulation protein"/>
    <property type="match status" value="1"/>
</dbReference>
<dbReference type="Gene3D" id="3.30.1490.190">
    <property type="match status" value="1"/>
</dbReference>
<dbReference type="Gene3D" id="1.10.10.10">
    <property type="entry name" value="Winged helix-like DNA-binding domain superfamily/Winged helix DNA-binding domain"/>
    <property type="match status" value="1"/>
</dbReference>
<dbReference type="InterPro" id="IPR002481">
    <property type="entry name" value="FUR"/>
</dbReference>
<dbReference type="InterPro" id="IPR043135">
    <property type="entry name" value="Fur_C"/>
</dbReference>
<dbReference type="InterPro" id="IPR036388">
    <property type="entry name" value="WH-like_DNA-bd_sf"/>
</dbReference>
<dbReference type="InterPro" id="IPR036390">
    <property type="entry name" value="WH_DNA-bd_sf"/>
</dbReference>
<dbReference type="NCBIfam" id="NF006999">
    <property type="entry name" value="PRK09462.1"/>
    <property type="match status" value="1"/>
</dbReference>
<dbReference type="PANTHER" id="PTHR33202:SF2">
    <property type="entry name" value="FERRIC UPTAKE REGULATION PROTEIN"/>
    <property type="match status" value="1"/>
</dbReference>
<dbReference type="PANTHER" id="PTHR33202">
    <property type="entry name" value="ZINC UPTAKE REGULATION PROTEIN"/>
    <property type="match status" value="1"/>
</dbReference>
<dbReference type="Pfam" id="PF01475">
    <property type="entry name" value="FUR"/>
    <property type="match status" value="1"/>
</dbReference>
<dbReference type="SUPFAM" id="SSF46785">
    <property type="entry name" value="Winged helix' DNA-binding domain"/>
    <property type="match status" value="1"/>
</dbReference>
<evidence type="ECO:0000250" key="1"/>
<evidence type="ECO:0000305" key="2"/>
<keyword id="KW-0963">Cytoplasm</keyword>
<keyword id="KW-0238">DNA-binding</keyword>
<keyword id="KW-0408">Iron</keyword>
<keyword id="KW-0479">Metal-binding</keyword>
<keyword id="KW-0678">Repressor</keyword>
<keyword id="KW-0804">Transcription</keyword>
<keyword id="KW-0805">Transcription regulation</keyword>
<keyword id="KW-0862">Zinc</keyword>
<sequence>MSDNNQALKDAGLKVTLPRLKILEVLQQPECQHISAEELYKKLIDLSEEIGLATVYRVLNQFDDAGIVTRHHFEGGKSVFELSTQHHHDHLVCLDCGEVIEFSDDVIEQRQKEIAAKYNVQLTNHSLYLYGKCGSDGSCKDNPNAHKPKK</sequence>
<name>FUR_VIBC3</name>
<feature type="chain" id="PRO_0000321851" description="Ferric uptake regulation protein">
    <location>
        <begin position="1"/>
        <end position="150"/>
    </location>
</feature>
<feature type="region of interest" description="DNA-binding" evidence="1">
    <location>
        <begin position="1"/>
        <end position="84"/>
    </location>
</feature>
<feature type="region of interest" description="Dimerization" evidence="1">
    <location>
        <begin position="85"/>
        <end position="143"/>
    </location>
</feature>
<feature type="binding site" evidence="1">
    <location>
        <position position="33"/>
    </location>
    <ligand>
        <name>Zn(2+)</name>
        <dbReference type="ChEBI" id="CHEBI:29105"/>
    </ligand>
</feature>
<feature type="binding site" evidence="1">
    <location>
        <position position="81"/>
    </location>
    <ligand>
        <name>Zn(2+)</name>
        <dbReference type="ChEBI" id="CHEBI:29105"/>
    </ligand>
</feature>
<feature type="binding site" evidence="1">
    <location>
        <position position="87"/>
    </location>
    <ligand>
        <name>Fe cation</name>
        <dbReference type="ChEBI" id="CHEBI:24875"/>
    </ligand>
</feature>
<feature type="binding site" evidence="1">
    <location>
        <position position="89"/>
    </location>
    <ligand>
        <name>Fe cation</name>
        <dbReference type="ChEBI" id="CHEBI:24875"/>
    </ligand>
</feature>
<feature type="binding site" evidence="1">
    <location>
        <position position="90"/>
    </location>
    <ligand>
        <name>Zn(2+)</name>
        <dbReference type="ChEBI" id="CHEBI:29105"/>
    </ligand>
</feature>
<feature type="binding site" evidence="1">
    <location>
        <position position="93"/>
    </location>
    <ligand>
        <name>Zn(2+)</name>
        <dbReference type="ChEBI" id="CHEBI:29105"/>
    </ligand>
</feature>
<feature type="binding site" evidence="1">
    <location>
        <position position="96"/>
    </location>
    <ligand>
        <name>Zn(2+)</name>
        <dbReference type="ChEBI" id="CHEBI:29105"/>
    </ligand>
</feature>
<feature type="binding site" evidence="1">
    <location>
        <position position="101"/>
    </location>
    <ligand>
        <name>Zn(2+)</name>
        <dbReference type="ChEBI" id="CHEBI:29105"/>
    </ligand>
</feature>
<feature type="binding site" evidence="1">
    <location>
        <position position="108"/>
    </location>
    <ligand>
        <name>Fe cation</name>
        <dbReference type="ChEBI" id="CHEBI:24875"/>
    </ligand>
</feature>
<feature type="binding site" evidence="1">
    <location>
        <position position="125"/>
    </location>
    <ligand>
        <name>Fe cation</name>
        <dbReference type="ChEBI" id="CHEBI:24875"/>
    </ligand>
</feature>
<protein>
    <recommendedName>
        <fullName>Ferric uptake regulation protein</fullName>
        <shortName>Ferric uptake regulator</shortName>
    </recommendedName>
</protein>
<comment type="function">
    <text>Fur acts as a repressor, employing Fe(2+) as a cofactor to bind the operator of the iron transport operon.</text>
</comment>
<comment type="subunit">
    <text evidence="1">Homodimer.</text>
</comment>
<comment type="subcellular location">
    <subcellularLocation>
        <location evidence="1">Cytoplasm</location>
    </subcellularLocation>
</comment>
<comment type="similarity">
    <text evidence="2">Belongs to the Fur family.</text>
</comment>
<gene>
    <name type="primary">fur</name>
    <name type="ordered locus">VC0395_A1690</name>
    <name type="ordered locus">VC395_2220</name>
</gene>
<reference key="1">
    <citation type="journal article" date="1992" name="J. Bacteriol.">
        <title>Cloning, sequencing, and transcriptional regulation of the Vibrio cholerae fur gene.</title>
        <authorList>
            <person name="Litwin C.M."/>
            <person name="Boyko S.A."/>
            <person name="Calderwood S.B."/>
        </authorList>
    </citation>
    <scope>NUCLEOTIDE SEQUENCE [GENOMIC DNA]</scope>
</reference>
<reference key="2">
    <citation type="submission" date="2007-03" db="EMBL/GenBank/DDBJ databases">
        <authorList>
            <person name="Heidelberg J."/>
        </authorList>
    </citation>
    <scope>NUCLEOTIDE SEQUENCE [LARGE SCALE GENOMIC DNA]</scope>
    <source>
        <strain>ATCC 39541 / Classical Ogawa 395 / O395</strain>
    </source>
</reference>
<reference key="3">
    <citation type="journal article" date="2008" name="PLoS ONE">
        <title>A recalibrated molecular clock and independent origins for the cholera pandemic clones.</title>
        <authorList>
            <person name="Feng L."/>
            <person name="Reeves P.R."/>
            <person name="Lan R."/>
            <person name="Ren Y."/>
            <person name="Gao C."/>
            <person name="Zhou Z."/>
            <person name="Ren Y."/>
            <person name="Cheng J."/>
            <person name="Wang W."/>
            <person name="Wang J."/>
            <person name="Qian W."/>
            <person name="Li D."/>
            <person name="Wang L."/>
        </authorList>
    </citation>
    <scope>NUCLEOTIDE SEQUENCE [LARGE SCALE GENOMIC DNA]</scope>
    <source>
        <strain>ATCC 39541 / Classical Ogawa 395 / O395</strain>
    </source>
</reference>
<proteinExistence type="inferred from homology"/>
<accession>A5F6G4</accession>
<accession>C3M2T8</accession>
<accession>P33087</accession>
<accession>Q9KQ94</accession>